<protein>
    <recommendedName>
        <fullName evidence="1">Probable cell division protein WhiA</fullName>
    </recommendedName>
</protein>
<organism>
    <name type="scientific">Desulforudis audaxviator (strain MP104C)</name>
    <dbReference type="NCBI Taxonomy" id="477974"/>
    <lineage>
        <taxon>Bacteria</taxon>
        <taxon>Bacillati</taxon>
        <taxon>Bacillota</taxon>
        <taxon>Clostridia</taxon>
        <taxon>Thermoanaerobacterales</taxon>
        <taxon>Candidatus Desulforudaceae</taxon>
        <taxon>Candidatus Desulforudis</taxon>
    </lineage>
</organism>
<proteinExistence type="inferred from homology"/>
<reference key="1">
    <citation type="submission" date="2007-10" db="EMBL/GenBank/DDBJ databases">
        <title>Complete sequence of chromosome of Desulforudis audaxviator MP104C.</title>
        <authorList>
            <person name="Copeland A."/>
            <person name="Lucas S."/>
            <person name="Lapidus A."/>
            <person name="Barry K."/>
            <person name="Glavina del Rio T."/>
            <person name="Dalin E."/>
            <person name="Tice H."/>
            <person name="Bruce D."/>
            <person name="Pitluck S."/>
            <person name="Lowry S.R."/>
            <person name="Larimer F."/>
            <person name="Land M.L."/>
            <person name="Hauser L."/>
            <person name="Kyrpides N."/>
            <person name="Ivanova N.N."/>
            <person name="Richardson P."/>
        </authorList>
    </citation>
    <scope>NUCLEOTIDE SEQUENCE [LARGE SCALE GENOMIC DNA]</scope>
    <source>
        <strain>MP104C</strain>
    </source>
</reference>
<gene>
    <name evidence="1" type="primary">whiA</name>
    <name type="ordered locus">Daud_0301</name>
</gene>
<accession>B1I0X5</accession>
<evidence type="ECO:0000255" key="1">
    <source>
        <dbReference type="HAMAP-Rule" id="MF_01420"/>
    </source>
</evidence>
<evidence type="ECO:0000305" key="2"/>
<dbReference type="EMBL" id="CP000860">
    <property type="protein sequence ID" value="ACA58862.1"/>
    <property type="status" value="ALT_INIT"/>
    <property type="molecule type" value="Genomic_DNA"/>
</dbReference>
<dbReference type="RefSeq" id="WP_041571035.1">
    <property type="nucleotide sequence ID" value="NC_010424.1"/>
</dbReference>
<dbReference type="SMR" id="B1I0X5"/>
<dbReference type="STRING" id="477974.Daud_0301"/>
<dbReference type="KEGG" id="dau:Daud_0301"/>
<dbReference type="eggNOG" id="COG1481">
    <property type="taxonomic scope" value="Bacteria"/>
</dbReference>
<dbReference type="HOGENOM" id="CLU_053282_0_0_9"/>
<dbReference type="OrthoDB" id="401278at2"/>
<dbReference type="Proteomes" id="UP000008544">
    <property type="component" value="Chromosome"/>
</dbReference>
<dbReference type="GO" id="GO:0003677">
    <property type="term" value="F:DNA binding"/>
    <property type="evidence" value="ECO:0007669"/>
    <property type="project" value="UniProtKB-UniRule"/>
</dbReference>
<dbReference type="GO" id="GO:0051301">
    <property type="term" value="P:cell division"/>
    <property type="evidence" value="ECO:0007669"/>
    <property type="project" value="UniProtKB-UniRule"/>
</dbReference>
<dbReference type="GO" id="GO:0043937">
    <property type="term" value="P:regulation of sporulation"/>
    <property type="evidence" value="ECO:0007669"/>
    <property type="project" value="InterPro"/>
</dbReference>
<dbReference type="Gene3D" id="3.10.28.10">
    <property type="entry name" value="Homing endonucleases"/>
    <property type="match status" value="1"/>
</dbReference>
<dbReference type="HAMAP" id="MF_01420">
    <property type="entry name" value="HTH_type_WhiA"/>
    <property type="match status" value="1"/>
</dbReference>
<dbReference type="InterPro" id="IPR027434">
    <property type="entry name" value="Homing_endonucl"/>
</dbReference>
<dbReference type="InterPro" id="IPR018478">
    <property type="entry name" value="Sporu_reg_WhiA_N_dom"/>
</dbReference>
<dbReference type="InterPro" id="IPR003802">
    <property type="entry name" value="Sporulation_regulator_WhiA"/>
</dbReference>
<dbReference type="InterPro" id="IPR023054">
    <property type="entry name" value="Sporulation_regulator_WhiA_C"/>
</dbReference>
<dbReference type="InterPro" id="IPR039518">
    <property type="entry name" value="WhiA_LAGLIDADG_dom"/>
</dbReference>
<dbReference type="NCBIfam" id="TIGR00647">
    <property type="entry name" value="DNA_bind_WhiA"/>
    <property type="match status" value="1"/>
</dbReference>
<dbReference type="PANTHER" id="PTHR37307">
    <property type="entry name" value="CELL DIVISION PROTEIN WHIA-RELATED"/>
    <property type="match status" value="1"/>
</dbReference>
<dbReference type="PANTHER" id="PTHR37307:SF1">
    <property type="entry name" value="CELL DIVISION PROTEIN WHIA-RELATED"/>
    <property type="match status" value="1"/>
</dbReference>
<dbReference type="Pfam" id="PF02650">
    <property type="entry name" value="HTH_WhiA"/>
    <property type="match status" value="1"/>
</dbReference>
<dbReference type="Pfam" id="PF14527">
    <property type="entry name" value="LAGLIDADG_WhiA"/>
    <property type="match status" value="1"/>
</dbReference>
<dbReference type="Pfam" id="PF10298">
    <property type="entry name" value="WhiA_N"/>
    <property type="match status" value="1"/>
</dbReference>
<dbReference type="SUPFAM" id="SSF55608">
    <property type="entry name" value="Homing endonucleases"/>
    <property type="match status" value="1"/>
</dbReference>
<feature type="chain" id="PRO_0000376480" description="Probable cell division protein WhiA">
    <location>
        <begin position="1"/>
        <end position="313"/>
    </location>
</feature>
<feature type="DNA-binding region" description="H-T-H motif" evidence="1">
    <location>
        <begin position="275"/>
        <end position="308"/>
    </location>
</feature>
<comment type="function">
    <text evidence="1">Involved in cell division and chromosome segregation.</text>
</comment>
<comment type="similarity">
    <text evidence="1">Belongs to the WhiA family.</text>
</comment>
<comment type="sequence caution" evidence="2">
    <conflict type="erroneous initiation">
        <sequence resource="EMBL-CDS" id="ACA58862"/>
    </conflict>
</comment>
<name>WHIA_DESAP</name>
<keyword id="KW-0131">Cell cycle</keyword>
<keyword id="KW-0132">Cell division</keyword>
<keyword id="KW-0238">DNA-binding</keyword>
<keyword id="KW-1185">Reference proteome</keyword>
<sequence length="313" mass="35194">MSFSAHTKDELARIEGLPSCCRLAELAALAKLNGRLVHGPAELLIVTENAAIARKVFKALKMQFRLAARVEIRRKPRLKKNNEYLVRIGNQDGLGPALEEMGLCTVSLRVRPGLKRDLVRRECCRRSYLRGAFLARGSVSSPRGSYHLEITVGDQRMAADLSGLMRKVGLEGRLSPRKRGWIVYLKDGEQVADALKLMGAHAALLDFENARVYKDMRNRVNRLVNCDTANLGKTVSAGVRQEEHIRLVVQRFGLETLSPPLRQVARLRLQYPEVSLRELGELAQPPLSKSCVNHRLRKLEQIAEHILASRTRN</sequence>